<keyword id="KW-0067">ATP-binding</keyword>
<keyword id="KW-0963">Cytoplasm</keyword>
<keyword id="KW-0227">DNA damage</keyword>
<keyword id="KW-0233">DNA recombination</keyword>
<keyword id="KW-0234">DNA repair</keyword>
<keyword id="KW-0238">DNA-binding</keyword>
<keyword id="KW-0547">Nucleotide-binding</keyword>
<keyword id="KW-0742">SOS response</keyword>
<evidence type="ECO:0000255" key="1">
    <source>
        <dbReference type="HAMAP-Rule" id="MF_00268"/>
    </source>
</evidence>
<accession>C0MAR6</accession>
<protein>
    <recommendedName>
        <fullName evidence="1">Protein RecA</fullName>
    </recommendedName>
    <alternativeName>
        <fullName evidence="1">Recombinase A</fullName>
    </alternativeName>
</protein>
<dbReference type="EMBL" id="FM204883">
    <property type="protein sequence ID" value="CAW95513.1"/>
    <property type="molecule type" value="Genomic_DNA"/>
</dbReference>
<dbReference type="RefSeq" id="WP_012678688.1">
    <property type="nucleotide sequence ID" value="NC_012471.1"/>
</dbReference>
<dbReference type="SMR" id="C0MAR6"/>
<dbReference type="KEGG" id="seu:SEQ_2152"/>
<dbReference type="HOGENOM" id="CLU_040469_3_2_9"/>
<dbReference type="OrthoDB" id="9776733at2"/>
<dbReference type="Proteomes" id="UP000001365">
    <property type="component" value="Chromosome"/>
</dbReference>
<dbReference type="GO" id="GO:0005829">
    <property type="term" value="C:cytosol"/>
    <property type="evidence" value="ECO:0007669"/>
    <property type="project" value="TreeGrafter"/>
</dbReference>
<dbReference type="GO" id="GO:0005524">
    <property type="term" value="F:ATP binding"/>
    <property type="evidence" value="ECO:0007669"/>
    <property type="project" value="UniProtKB-UniRule"/>
</dbReference>
<dbReference type="GO" id="GO:0016887">
    <property type="term" value="F:ATP hydrolysis activity"/>
    <property type="evidence" value="ECO:0007669"/>
    <property type="project" value="InterPro"/>
</dbReference>
<dbReference type="GO" id="GO:0140664">
    <property type="term" value="F:ATP-dependent DNA damage sensor activity"/>
    <property type="evidence" value="ECO:0007669"/>
    <property type="project" value="InterPro"/>
</dbReference>
<dbReference type="GO" id="GO:0003684">
    <property type="term" value="F:damaged DNA binding"/>
    <property type="evidence" value="ECO:0007669"/>
    <property type="project" value="UniProtKB-UniRule"/>
</dbReference>
<dbReference type="GO" id="GO:0003697">
    <property type="term" value="F:single-stranded DNA binding"/>
    <property type="evidence" value="ECO:0007669"/>
    <property type="project" value="UniProtKB-UniRule"/>
</dbReference>
<dbReference type="GO" id="GO:0006310">
    <property type="term" value="P:DNA recombination"/>
    <property type="evidence" value="ECO:0007669"/>
    <property type="project" value="UniProtKB-UniRule"/>
</dbReference>
<dbReference type="GO" id="GO:0006281">
    <property type="term" value="P:DNA repair"/>
    <property type="evidence" value="ECO:0007669"/>
    <property type="project" value="UniProtKB-UniRule"/>
</dbReference>
<dbReference type="GO" id="GO:0009432">
    <property type="term" value="P:SOS response"/>
    <property type="evidence" value="ECO:0007669"/>
    <property type="project" value="UniProtKB-UniRule"/>
</dbReference>
<dbReference type="CDD" id="cd00983">
    <property type="entry name" value="RecA"/>
    <property type="match status" value="1"/>
</dbReference>
<dbReference type="FunFam" id="3.40.50.300:FF:000087">
    <property type="entry name" value="Recombinase RecA"/>
    <property type="match status" value="1"/>
</dbReference>
<dbReference type="Gene3D" id="3.40.50.300">
    <property type="entry name" value="P-loop containing nucleotide triphosphate hydrolases"/>
    <property type="match status" value="1"/>
</dbReference>
<dbReference type="HAMAP" id="MF_00268">
    <property type="entry name" value="RecA"/>
    <property type="match status" value="1"/>
</dbReference>
<dbReference type="InterPro" id="IPR003593">
    <property type="entry name" value="AAA+_ATPase"/>
</dbReference>
<dbReference type="InterPro" id="IPR013765">
    <property type="entry name" value="DNA_recomb/repair_RecA"/>
</dbReference>
<dbReference type="InterPro" id="IPR020584">
    <property type="entry name" value="DNA_recomb/repair_RecA_CS"/>
</dbReference>
<dbReference type="InterPro" id="IPR027417">
    <property type="entry name" value="P-loop_NTPase"/>
</dbReference>
<dbReference type="InterPro" id="IPR049261">
    <property type="entry name" value="RecA-like_C"/>
</dbReference>
<dbReference type="InterPro" id="IPR049428">
    <property type="entry name" value="RecA-like_N"/>
</dbReference>
<dbReference type="InterPro" id="IPR020588">
    <property type="entry name" value="RecA_ATP-bd"/>
</dbReference>
<dbReference type="InterPro" id="IPR023400">
    <property type="entry name" value="RecA_C_sf"/>
</dbReference>
<dbReference type="InterPro" id="IPR020587">
    <property type="entry name" value="RecA_monomer-monomer_interface"/>
</dbReference>
<dbReference type="NCBIfam" id="TIGR02012">
    <property type="entry name" value="tigrfam_recA"/>
    <property type="match status" value="1"/>
</dbReference>
<dbReference type="PANTHER" id="PTHR45900:SF1">
    <property type="entry name" value="MITOCHONDRIAL DNA REPAIR PROTEIN RECA HOMOLOG-RELATED"/>
    <property type="match status" value="1"/>
</dbReference>
<dbReference type="PANTHER" id="PTHR45900">
    <property type="entry name" value="RECA"/>
    <property type="match status" value="1"/>
</dbReference>
<dbReference type="Pfam" id="PF00154">
    <property type="entry name" value="RecA"/>
    <property type="match status" value="1"/>
</dbReference>
<dbReference type="Pfam" id="PF21096">
    <property type="entry name" value="RecA_C"/>
    <property type="match status" value="1"/>
</dbReference>
<dbReference type="PRINTS" id="PR00142">
    <property type="entry name" value="RECA"/>
</dbReference>
<dbReference type="SMART" id="SM00382">
    <property type="entry name" value="AAA"/>
    <property type="match status" value="1"/>
</dbReference>
<dbReference type="SUPFAM" id="SSF52540">
    <property type="entry name" value="P-loop containing nucleoside triphosphate hydrolases"/>
    <property type="match status" value="1"/>
</dbReference>
<dbReference type="SUPFAM" id="SSF54752">
    <property type="entry name" value="RecA protein, C-terminal domain"/>
    <property type="match status" value="1"/>
</dbReference>
<dbReference type="PROSITE" id="PS00321">
    <property type="entry name" value="RECA_1"/>
    <property type="match status" value="1"/>
</dbReference>
<dbReference type="PROSITE" id="PS50162">
    <property type="entry name" value="RECA_2"/>
    <property type="match status" value="1"/>
</dbReference>
<dbReference type="PROSITE" id="PS50163">
    <property type="entry name" value="RECA_3"/>
    <property type="match status" value="1"/>
</dbReference>
<sequence>MAKKVKKNEEITKKFGDERRKALDDALKNIEKDFGKGAVMRLGERAEQKVQVMSSGSLALDIALGAGGYPKGRIIEIYGPESSGKTTVALHAVAQAQKEGGIAAFIDAEHALDPAYAAALGVNIDELLLSQPDSGEQGLEIAGKLIDSGAVDLVVVDSVAALVPRAEIDGDIGDNHVGLQARMMSQAMRKLSASINKTKTIAIFINQLREKVGVMFGNPETTPGGRALKFYASVRLDVRGTTQIKGTGDQKDSSIGKETKIKVVKNKVAPPFKVAEVEIMYGEGISRTGELIKIASDLDIIQKAGAWFSYNGEKIGQGSENAKRYLADHPELFDEIDHKVRVKFGLLEDTEESAAADTVAAKADELVLELDDAIEIED</sequence>
<reference key="1">
    <citation type="journal article" date="2009" name="PLoS Pathog.">
        <title>Genomic evidence for the evolution of Streptococcus equi: host restriction, increased virulence, and genetic exchange with human pathogens.</title>
        <authorList>
            <person name="Holden M.T.G."/>
            <person name="Heather Z."/>
            <person name="Paillot R."/>
            <person name="Steward K.F."/>
            <person name="Webb K."/>
            <person name="Ainslie F."/>
            <person name="Jourdan T."/>
            <person name="Bason N.C."/>
            <person name="Holroyd N.E."/>
            <person name="Mungall K."/>
            <person name="Quail M.A."/>
            <person name="Sanders M."/>
            <person name="Simmonds M."/>
            <person name="Willey D."/>
            <person name="Brooks K."/>
            <person name="Aanensen D.M."/>
            <person name="Spratt B.G."/>
            <person name="Jolley K.A."/>
            <person name="Maiden M.C.J."/>
            <person name="Kehoe M."/>
            <person name="Chanter N."/>
            <person name="Bentley S.D."/>
            <person name="Robinson C."/>
            <person name="Maskell D.J."/>
            <person name="Parkhill J."/>
            <person name="Waller A.S."/>
        </authorList>
    </citation>
    <scope>NUCLEOTIDE SEQUENCE [LARGE SCALE GENOMIC DNA]</scope>
    <source>
        <strain>4047</strain>
    </source>
</reference>
<organism>
    <name type="scientific">Streptococcus equi subsp. equi (strain 4047)</name>
    <dbReference type="NCBI Taxonomy" id="553482"/>
    <lineage>
        <taxon>Bacteria</taxon>
        <taxon>Bacillati</taxon>
        <taxon>Bacillota</taxon>
        <taxon>Bacilli</taxon>
        <taxon>Lactobacillales</taxon>
        <taxon>Streptococcaceae</taxon>
        <taxon>Streptococcus</taxon>
    </lineage>
</organism>
<gene>
    <name evidence="1" type="primary">recA</name>
    <name type="ordered locus">SEQ_2152</name>
</gene>
<proteinExistence type="inferred from homology"/>
<comment type="function">
    <text evidence="1">Can catalyze the hydrolysis of ATP in the presence of single-stranded DNA, the ATP-dependent uptake of single-stranded DNA by duplex DNA, and the ATP-dependent hybridization of homologous single-stranded DNAs. It interacts with LexA causing its activation and leading to its autocatalytic cleavage.</text>
</comment>
<comment type="subcellular location">
    <subcellularLocation>
        <location evidence="1">Cytoplasm</location>
    </subcellularLocation>
</comment>
<comment type="similarity">
    <text evidence="1">Belongs to the RecA family.</text>
</comment>
<feature type="chain" id="PRO_1000193329" description="Protein RecA">
    <location>
        <begin position="1"/>
        <end position="378"/>
    </location>
</feature>
<feature type="binding site" evidence="1">
    <location>
        <begin position="79"/>
        <end position="86"/>
    </location>
    <ligand>
        <name>ATP</name>
        <dbReference type="ChEBI" id="CHEBI:30616"/>
    </ligand>
</feature>
<name>RECA_STRE4</name>